<reference key="1">
    <citation type="journal article" date="1991" name="Virology">
        <title>The nucleotide sequence and genome organization of the RNA-1 segment in two bromoviruses: broad bean mottle virus and cowpea chlorotic mottle virus.</title>
        <authorList>
            <person name="Dzianott A.M."/>
            <person name="Bujarski J.J."/>
        </authorList>
    </citation>
    <scope>NUCLEOTIDE SEQUENCE [GENOMIC RNA]</scope>
    <source>
        <strain>Bawden</strain>
    </source>
</reference>
<keyword id="KW-0067">ATP-binding</keyword>
<keyword id="KW-0347">Helicase</keyword>
<keyword id="KW-1038">Host endoplasmic reticulum</keyword>
<keyword id="KW-1043">Host membrane</keyword>
<keyword id="KW-0378">Hydrolase</keyword>
<keyword id="KW-0472">Membrane</keyword>
<keyword id="KW-0489">Methyltransferase</keyword>
<keyword id="KW-0547">Nucleotide-binding</keyword>
<keyword id="KW-0808">Transferase</keyword>
<accession>Q00020</accession>
<evidence type="ECO:0000250" key="1"/>
<evidence type="ECO:0000255" key="2"/>
<evidence type="ECO:0000255" key="3">
    <source>
        <dbReference type="PROSITE-ProRule" id="PRU01079"/>
    </source>
</evidence>
<evidence type="ECO:0000305" key="4"/>
<feature type="chain" id="PRO_0000083255" description="Replication protein 1a">
    <location>
        <begin position="1"/>
        <end position="966"/>
    </location>
</feature>
<feature type="domain" description="Alphavirus-like MT" evidence="3">
    <location>
        <begin position="71"/>
        <end position="261"/>
    </location>
</feature>
<feature type="domain" description="(+)RNA virus helicase ATP-binding">
    <location>
        <begin position="660"/>
        <end position="815"/>
    </location>
</feature>
<feature type="domain" description="(+)RNA virus helicase C-terminal">
    <location>
        <begin position="816"/>
        <end position="966"/>
    </location>
</feature>
<feature type="region of interest" description="Methyltransferase">
    <location>
        <begin position="49"/>
        <end position="381"/>
    </location>
</feature>
<feature type="region of interest" description="ATP-dependent helicase">
    <location>
        <begin position="687"/>
        <end position="951"/>
    </location>
</feature>
<feature type="binding site" evidence="2">
    <location>
        <begin position="690"/>
        <end position="697"/>
    </location>
    <ligand>
        <name>ATP</name>
        <dbReference type="ChEBI" id="CHEBI:30616"/>
    </ligand>
</feature>
<dbReference type="EC" id="3.6.4.-"/>
<dbReference type="EC" id="2.1.1.-"/>
<dbReference type="EMBL" id="M65138">
    <property type="protein sequence ID" value="AAA42740.1"/>
    <property type="molecule type" value="Genomic_RNA"/>
</dbReference>
<dbReference type="PIR" id="A41699">
    <property type="entry name" value="P1BVBB"/>
</dbReference>
<dbReference type="RefSeq" id="NP_659000.1">
    <property type="nucleotide sequence ID" value="NC_004008.1"/>
</dbReference>
<dbReference type="SMR" id="Q00020"/>
<dbReference type="KEGG" id="vg:962140"/>
<dbReference type="OrthoDB" id="1460at10239"/>
<dbReference type="Proteomes" id="UP000007448">
    <property type="component" value="Genome"/>
</dbReference>
<dbReference type="GO" id="GO:0044167">
    <property type="term" value="C:host cell endoplasmic reticulum membrane"/>
    <property type="evidence" value="ECO:0007669"/>
    <property type="project" value="UniProtKB-SubCell"/>
</dbReference>
<dbReference type="GO" id="GO:0016020">
    <property type="term" value="C:membrane"/>
    <property type="evidence" value="ECO:0007669"/>
    <property type="project" value="UniProtKB-KW"/>
</dbReference>
<dbReference type="GO" id="GO:0005524">
    <property type="term" value="F:ATP binding"/>
    <property type="evidence" value="ECO:0007669"/>
    <property type="project" value="UniProtKB-KW"/>
</dbReference>
<dbReference type="GO" id="GO:0004386">
    <property type="term" value="F:helicase activity"/>
    <property type="evidence" value="ECO:0007669"/>
    <property type="project" value="UniProtKB-KW"/>
</dbReference>
<dbReference type="GO" id="GO:0016817">
    <property type="term" value="F:hydrolase activity, acting on acid anhydrides"/>
    <property type="evidence" value="ECO:0007669"/>
    <property type="project" value="InterPro"/>
</dbReference>
<dbReference type="GO" id="GO:0008174">
    <property type="term" value="F:mRNA methyltransferase activity"/>
    <property type="evidence" value="ECO:0007669"/>
    <property type="project" value="InterPro"/>
</dbReference>
<dbReference type="GO" id="GO:0003723">
    <property type="term" value="F:RNA binding"/>
    <property type="evidence" value="ECO:0007669"/>
    <property type="project" value="InterPro"/>
</dbReference>
<dbReference type="GO" id="GO:0032259">
    <property type="term" value="P:methylation"/>
    <property type="evidence" value="ECO:0007669"/>
    <property type="project" value="UniProtKB-KW"/>
</dbReference>
<dbReference type="GO" id="GO:0016556">
    <property type="term" value="P:mRNA modification"/>
    <property type="evidence" value="ECO:0007669"/>
    <property type="project" value="InterPro"/>
</dbReference>
<dbReference type="GO" id="GO:0006396">
    <property type="term" value="P:RNA processing"/>
    <property type="evidence" value="ECO:0007669"/>
    <property type="project" value="InterPro"/>
</dbReference>
<dbReference type="Gene3D" id="3.40.50.300">
    <property type="entry name" value="P-loop containing nucleotide triphosphate hydrolases"/>
    <property type="match status" value="2"/>
</dbReference>
<dbReference type="InterPro" id="IPR027351">
    <property type="entry name" value="(+)RNA_virus_helicase_core_dom"/>
</dbReference>
<dbReference type="InterPro" id="IPR002588">
    <property type="entry name" value="Alphavirus-like_MT_dom"/>
</dbReference>
<dbReference type="InterPro" id="IPR022184">
    <property type="entry name" value="CMV_1a_C"/>
</dbReference>
<dbReference type="InterPro" id="IPR027417">
    <property type="entry name" value="P-loop_NTPase"/>
</dbReference>
<dbReference type="Pfam" id="PF12503">
    <property type="entry name" value="CMV_1a_C"/>
    <property type="match status" value="1"/>
</dbReference>
<dbReference type="Pfam" id="PF01443">
    <property type="entry name" value="Viral_helicase1"/>
    <property type="match status" value="1"/>
</dbReference>
<dbReference type="Pfam" id="PF01660">
    <property type="entry name" value="Vmethyltransf"/>
    <property type="match status" value="1"/>
</dbReference>
<dbReference type="SUPFAM" id="SSF52540">
    <property type="entry name" value="P-loop containing nucleoside triphosphate hydrolases"/>
    <property type="match status" value="1"/>
</dbReference>
<dbReference type="PROSITE" id="PS51743">
    <property type="entry name" value="ALPHAVIRUS_MT"/>
    <property type="match status" value="1"/>
</dbReference>
<dbReference type="PROSITE" id="PS51657">
    <property type="entry name" value="PSRV_HELICASE"/>
    <property type="match status" value="1"/>
</dbReference>
<name>1A_BBMV</name>
<organismHost>
    <name type="scientific">Vicia faba</name>
    <name type="common">Broad bean</name>
    <name type="synonym">Faba vulgaris</name>
    <dbReference type="NCBI Taxonomy" id="3906"/>
</organismHost>
<protein>
    <recommendedName>
        <fullName>Replication protein 1a</fullName>
    </recommendedName>
    <domain>
        <recommendedName>
            <fullName>ATP-dependent helicase</fullName>
            <ecNumber>3.6.4.-</ecNumber>
        </recommendedName>
    </domain>
    <domain>
        <recommendedName>
            <fullName>Methyltransferase</fullName>
            <ecNumber>2.1.1.-</ecNumber>
        </recommendedName>
    </domain>
</protein>
<gene>
    <name type="ORF">ORF1a</name>
</gene>
<sequence length="966" mass="109622">MSSFVNLESLISERGANCRGADEIVNNETTRILTSQIEHSQRSKKVNIRNKLSVAECDAFRARYGGAFDVNLTHEYTAPHSLAGALRVAEHYDCIDSFPPEDKIIDFGGSWLHHYSRGDSRVHSCCPILGPRDATRHEERMCRLRKMVQTSDRFVDVPDFCLNKAEDCNVQADWAICIHGGYDMGFQGLCKAMHAPLERGILQGTIMFDGAMLFDRQGELPLLQCRWQRVGTGSKEQIKFDFINESTLSYVHDWKNLGSFLTESTYSIGGTTYLLERMLLKCSIMTYKIIATNVRCPPESLRHCIWFENISQYLAVQIPIGYNLNDWKTVRVARATVREVEEISFRCFKENKDWTENMRSVASILSAKSSTVIINGQSIMSGERLDVLEYHLVAFSLTLNLYQKYEKLRNFQGELEWKGWANHFKTRLWWCGRTVSTEGGFLRNFLADKIPWLKLNTYADSLDFITKISEVESFEVDSVPTSRLRSFFQKEENIVERAASEIMSANARRIAKKAEMSKEFDDFVDAPEEFAPEDVVEEVINTPVTQDVKLRQSKPETARSIVLDPDAVLKNGAINEFADYSKRLHENTVSNLRHLWTLMGCRGNEIHNKSVAETYHRVDDMVNVHFPNGHWMYPLKYEYTVGYNDGGLGEKFENELYVVDKTCSCANAKAIADACKKVSAPTCSVVMVDGVAGCGKTTAIKETFRFEKDIIVTANRKSAEDVRKAIFGDASDSEVALKVVRTADSAIMHGLPECHRLLVDEAGLLHYGQLLAVADLCKCSEVLAFGDTEQISFKSRDATFRMKYCNIEYDKRDIVSKTFRCPQDVVSAVKILKRKCANRSSKYNGWVSSSKVEKSLSKSRIVSINQVSMEKHKFYLTMTEADKAALCSRAKDVGLDKTWVESNMETVHEAQGKAVDHVVLVRLKSTKCDLFKSEEYCLVALTRHKRTFEYLYNGDLGGDLISFYVT</sequence>
<organism>
    <name type="scientific">Broad bean mottle virus</name>
    <dbReference type="NCBI Taxonomy" id="12301"/>
    <lineage>
        <taxon>Viruses</taxon>
        <taxon>Riboviria</taxon>
        <taxon>Orthornavirae</taxon>
        <taxon>Kitrinoviricota</taxon>
        <taxon>Alsuviricetes</taxon>
        <taxon>Martellivirales</taxon>
        <taxon>Bromoviridae</taxon>
        <taxon>Bromovirus</taxon>
    </lineage>
</organism>
<comment type="function">
    <text>Involved in the virus replication. Contains a helicase domain and a methyltransferase domain. The methyltransferase domain is probably involved in viral RNA capping.</text>
</comment>
<comment type="subcellular location">
    <subcellularLocation>
        <location evidence="1">Host endoplasmic reticulum membrane</location>
        <topology>Peripheral membrane protein</topology>
    </subcellularLocation>
</comment>
<comment type="similarity">
    <text evidence="4">Belongs to the bromoviridae replication protein 1a family.</text>
</comment>
<proteinExistence type="inferred from homology"/>